<gene>
    <name evidence="1" type="primary">nadD</name>
    <name type="ordered locus">Shewana3_0998</name>
</gene>
<name>NADD_SHESA</name>
<proteinExistence type="inferred from homology"/>
<organism>
    <name type="scientific">Shewanella sp. (strain ANA-3)</name>
    <dbReference type="NCBI Taxonomy" id="94122"/>
    <lineage>
        <taxon>Bacteria</taxon>
        <taxon>Pseudomonadati</taxon>
        <taxon>Pseudomonadota</taxon>
        <taxon>Gammaproteobacteria</taxon>
        <taxon>Alteromonadales</taxon>
        <taxon>Shewanellaceae</taxon>
        <taxon>Shewanella</taxon>
    </lineage>
</organism>
<dbReference type="EC" id="2.7.7.18" evidence="1"/>
<dbReference type="EMBL" id="CP000469">
    <property type="protein sequence ID" value="ABK47233.1"/>
    <property type="molecule type" value="Genomic_DNA"/>
</dbReference>
<dbReference type="RefSeq" id="WP_011716118.1">
    <property type="nucleotide sequence ID" value="NC_008577.1"/>
</dbReference>
<dbReference type="SMR" id="A0KTW4"/>
<dbReference type="STRING" id="94122.Shewana3_0998"/>
<dbReference type="KEGG" id="shn:Shewana3_0998"/>
<dbReference type="eggNOG" id="COG1057">
    <property type="taxonomic scope" value="Bacteria"/>
</dbReference>
<dbReference type="HOGENOM" id="CLU_069765_0_0_6"/>
<dbReference type="OrthoDB" id="5295945at2"/>
<dbReference type="UniPathway" id="UPA00253">
    <property type="reaction ID" value="UER00332"/>
</dbReference>
<dbReference type="Proteomes" id="UP000002589">
    <property type="component" value="Chromosome"/>
</dbReference>
<dbReference type="GO" id="GO:0005524">
    <property type="term" value="F:ATP binding"/>
    <property type="evidence" value="ECO:0007669"/>
    <property type="project" value="UniProtKB-KW"/>
</dbReference>
<dbReference type="GO" id="GO:0004515">
    <property type="term" value="F:nicotinate-nucleotide adenylyltransferase activity"/>
    <property type="evidence" value="ECO:0007669"/>
    <property type="project" value="UniProtKB-UniRule"/>
</dbReference>
<dbReference type="GO" id="GO:0009435">
    <property type="term" value="P:NAD biosynthetic process"/>
    <property type="evidence" value="ECO:0007669"/>
    <property type="project" value="UniProtKB-UniRule"/>
</dbReference>
<dbReference type="CDD" id="cd02165">
    <property type="entry name" value="NMNAT"/>
    <property type="match status" value="1"/>
</dbReference>
<dbReference type="FunFam" id="3.40.50.620:FF:000039">
    <property type="entry name" value="Probable nicotinate-nucleotide adenylyltransferase"/>
    <property type="match status" value="1"/>
</dbReference>
<dbReference type="Gene3D" id="3.40.50.620">
    <property type="entry name" value="HUPs"/>
    <property type="match status" value="1"/>
</dbReference>
<dbReference type="HAMAP" id="MF_00244">
    <property type="entry name" value="NaMN_adenylyltr"/>
    <property type="match status" value="1"/>
</dbReference>
<dbReference type="InterPro" id="IPR004821">
    <property type="entry name" value="Cyt_trans-like"/>
</dbReference>
<dbReference type="InterPro" id="IPR005248">
    <property type="entry name" value="NadD/NMNAT"/>
</dbReference>
<dbReference type="InterPro" id="IPR014729">
    <property type="entry name" value="Rossmann-like_a/b/a_fold"/>
</dbReference>
<dbReference type="NCBIfam" id="TIGR00125">
    <property type="entry name" value="cyt_tran_rel"/>
    <property type="match status" value="1"/>
</dbReference>
<dbReference type="NCBIfam" id="TIGR00482">
    <property type="entry name" value="nicotinate (nicotinamide) nucleotide adenylyltransferase"/>
    <property type="match status" value="1"/>
</dbReference>
<dbReference type="NCBIfam" id="NF000839">
    <property type="entry name" value="PRK00071.1-1"/>
    <property type="match status" value="1"/>
</dbReference>
<dbReference type="NCBIfam" id="NF000840">
    <property type="entry name" value="PRK00071.1-3"/>
    <property type="match status" value="1"/>
</dbReference>
<dbReference type="PANTHER" id="PTHR39321">
    <property type="entry name" value="NICOTINATE-NUCLEOTIDE ADENYLYLTRANSFERASE-RELATED"/>
    <property type="match status" value="1"/>
</dbReference>
<dbReference type="PANTHER" id="PTHR39321:SF3">
    <property type="entry name" value="PHOSPHOPANTETHEINE ADENYLYLTRANSFERASE"/>
    <property type="match status" value="1"/>
</dbReference>
<dbReference type="Pfam" id="PF01467">
    <property type="entry name" value="CTP_transf_like"/>
    <property type="match status" value="1"/>
</dbReference>
<dbReference type="SUPFAM" id="SSF52374">
    <property type="entry name" value="Nucleotidylyl transferase"/>
    <property type="match status" value="1"/>
</dbReference>
<comment type="function">
    <text evidence="1">Catalyzes the reversible adenylation of nicotinate mononucleotide (NaMN) to nicotinic acid adenine dinucleotide (NaAD).</text>
</comment>
<comment type="catalytic activity">
    <reaction evidence="1">
        <text>nicotinate beta-D-ribonucleotide + ATP + H(+) = deamido-NAD(+) + diphosphate</text>
        <dbReference type="Rhea" id="RHEA:22860"/>
        <dbReference type="ChEBI" id="CHEBI:15378"/>
        <dbReference type="ChEBI" id="CHEBI:30616"/>
        <dbReference type="ChEBI" id="CHEBI:33019"/>
        <dbReference type="ChEBI" id="CHEBI:57502"/>
        <dbReference type="ChEBI" id="CHEBI:58437"/>
        <dbReference type="EC" id="2.7.7.18"/>
    </reaction>
</comment>
<comment type="pathway">
    <text evidence="1">Cofactor biosynthesis; NAD(+) biosynthesis; deamido-NAD(+) from nicotinate D-ribonucleotide: step 1/1.</text>
</comment>
<comment type="similarity">
    <text evidence="1">Belongs to the NadD family.</text>
</comment>
<accession>A0KTW4</accession>
<reference key="1">
    <citation type="submission" date="2006-09" db="EMBL/GenBank/DDBJ databases">
        <title>Complete sequence of chromosome 1 of Shewanella sp. ANA-3.</title>
        <authorList>
            <person name="Copeland A."/>
            <person name="Lucas S."/>
            <person name="Lapidus A."/>
            <person name="Barry K."/>
            <person name="Detter J.C."/>
            <person name="Glavina del Rio T."/>
            <person name="Hammon N."/>
            <person name="Israni S."/>
            <person name="Dalin E."/>
            <person name="Tice H."/>
            <person name="Pitluck S."/>
            <person name="Chertkov O."/>
            <person name="Brettin T."/>
            <person name="Bruce D."/>
            <person name="Han C."/>
            <person name="Tapia R."/>
            <person name="Gilna P."/>
            <person name="Schmutz J."/>
            <person name="Larimer F."/>
            <person name="Land M."/>
            <person name="Hauser L."/>
            <person name="Kyrpides N."/>
            <person name="Kim E."/>
            <person name="Newman D."/>
            <person name="Salticov C."/>
            <person name="Konstantinidis K."/>
            <person name="Klappenback J."/>
            <person name="Tiedje J."/>
            <person name="Richardson P."/>
        </authorList>
    </citation>
    <scope>NUCLEOTIDE SEQUENCE [LARGE SCALE GENOMIC DNA]</scope>
    <source>
        <strain>ANA-3</strain>
    </source>
</reference>
<feature type="chain" id="PRO_0000310141" description="Probable nicotinate-nucleotide adenylyltransferase">
    <location>
        <begin position="1"/>
        <end position="212"/>
    </location>
</feature>
<sequence>MRIGILGGTFDPIHYGHIRPAMEVKASLKLDKILLMPNHIPPHKNTTHSSTAQRLEMVAQVCEALTGFELCDIEAKRDSPSYTVVTLQQLSRLYPDDELFFIMGMDSFIHLQSWHKWLQLFELANIVVCQRPGWHLAEGHPMQHELSARHATLEALSHSSEPQHGRIFTVDISPQDISSTQIRSQLAMGEIPQDALLPVTLNYIQKQRLYFS</sequence>
<keyword id="KW-0067">ATP-binding</keyword>
<keyword id="KW-0520">NAD</keyword>
<keyword id="KW-0547">Nucleotide-binding</keyword>
<keyword id="KW-0548">Nucleotidyltransferase</keyword>
<keyword id="KW-0662">Pyridine nucleotide biosynthesis</keyword>
<keyword id="KW-0808">Transferase</keyword>
<evidence type="ECO:0000255" key="1">
    <source>
        <dbReference type="HAMAP-Rule" id="MF_00244"/>
    </source>
</evidence>
<protein>
    <recommendedName>
        <fullName evidence="1">Probable nicotinate-nucleotide adenylyltransferase</fullName>
        <ecNumber evidence="1">2.7.7.18</ecNumber>
    </recommendedName>
    <alternativeName>
        <fullName evidence="1">Deamido-NAD(+) diphosphorylase</fullName>
    </alternativeName>
    <alternativeName>
        <fullName evidence="1">Deamido-NAD(+) pyrophosphorylase</fullName>
    </alternativeName>
    <alternativeName>
        <fullName evidence="1">Nicotinate mononucleotide adenylyltransferase</fullName>
        <shortName evidence="1">NaMN adenylyltransferase</shortName>
    </alternativeName>
</protein>